<name>YBEY_STRCO</name>
<sequence>MSIDVNNESGTEVDEQAILDIARYALARMRIHPLSELSVIVVDAEAMEQLHIQWMDLPGPTDVMSFPMDELRPPSKDEEEAPQGLLGDIVLCPEVAAKQGAEAPTEHSMDEELQLLTVHGVLHLLGYDHEEPDEKAEMFGLQAAIVDGWRAEKGLTGPSPAPTVS</sequence>
<keyword id="KW-0963">Cytoplasm</keyword>
<keyword id="KW-0255">Endonuclease</keyword>
<keyword id="KW-0378">Hydrolase</keyword>
<keyword id="KW-0479">Metal-binding</keyword>
<keyword id="KW-0540">Nuclease</keyword>
<keyword id="KW-1185">Reference proteome</keyword>
<keyword id="KW-0690">Ribosome biogenesis</keyword>
<keyword id="KW-0698">rRNA processing</keyword>
<keyword id="KW-0862">Zinc</keyword>
<comment type="function">
    <text evidence="1">Single strand-specific metallo-endoribonuclease involved in late-stage 70S ribosome quality control and in maturation of the 3' terminus of the 16S rRNA.</text>
</comment>
<comment type="cofactor">
    <cofactor evidence="1">
        <name>Zn(2+)</name>
        <dbReference type="ChEBI" id="CHEBI:29105"/>
    </cofactor>
    <text evidence="1">Binds 1 zinc ion.</text>
</comment>
<comment type="subcellular location">
    <subcellularLocation>
        <location evidence="1">Cytoplasm</location>
    </subcellularLocation>
</comment>
<comment type="similarity">
    <text evidence="1">Belongs to the endoribonuclease YbeY family.</text>
</comment>
<feature type="chain" id="PRO_0000102538" description="Endoribonuclease YbeY">
    <location>
        <begin position="1"/>
        <end position="165"/>
    </location>
</feature>
<feature type="binding site" evidence="1">
    <location>
        <position position="119"/>
    </location>
    <ligand>
        <name>Zn(2+)</name>
        <dbReference type="ChEBI" id="CHEBI:29105"/>
        <note>catalytic</note>
    </ligand>
</feature>
<feature type="binding site" evidence="1">
    <location>
        <position position="123"/>
    </location>
    <ligand>
        <name>Zn(2+)</name>
        <dbReference type="ChEBI" id="CHEBI:29105"/>
        <note>catalytic</note>
    </ligand>
</feature>
<feature type="binding site" evidence="1">
    <location>
        <position position="129"/>
    </location>
    <ligand>
        <name>Zn(2+)</name>
        <dbReference type="ChEBI" id="CHEBI:29105"/>
        <note>catalytic</note>
    </ligand>
</feature>
<organism>
    <name type="scientific">Streptomyces coelicolor (strain ATCC BAA-471 / A3(2) / M145)</name>
    <dbReference type="NCBI Taxonomy" id="100226"/>
    <lineage>
        <taxon>Bacteria</taxon>
        <taxon>Bacillati</taxon>
        <taxon>Actinomycetota</taxon>
        <taxon>Actinomycetes</taxon>
        <taxon>Kitasatosporales</taxon>
        <taxon>Streptomycetaceae</taxon>
        <taxon>Streptomyces</taxon>
        <taxon>Streptomyces albidoflavus group</taxon>
    </lineage>
</organism>
<reference key="1">
    <citation type="journal article" date="2002" name="Nature">
        <title>Complete genome sequence of the model actinomycete Streptomyces coelicolor A3(2).</title>
        <authorList>
            <person name="Bentley S.D."/>
            <person name="Chater K.F."/>
            <person name="Cerdeno-Tarraga A.-M."/>
            <person name="Challis G.L."/>
            <person name="Thomson N.R."/>
            <person name="James K.D."/>
            <person name="Harris D.E."/>
            <person name="Quail M.A."/>
            <person name="Kieser H."/>
            <person name="Harper D."/>
            <person name="Bateman A."/>
            <person name="Brown S."/>
            <person name="Chandra G."/>
            <person name="Chen C.W."/>
            <person name="Collins M."/>
            <person name="Cronin A."/>
            <person name="Fraser A."/>
            <person name="Goble A."/>
            <person name="Hidalgo J."/>
            <person name="Hornsby T."/>
            <person name="Howarth S."/>
            <person name="Huang C.-H."/>
            <person name="Kieser T."/>
            <person name="Larke L."/>
            <person name="Murphy L.D."/>
            <person name="Oliver K."/>
            <person name="O'Neil S."/>
            <person name="Rabbinowitsch E."/>
            <person name="Rajandream M.A."/>
            <person name="Rutherford K.M."/>
            <person name="Rutter S."/>
            <person name="Seeger K."/>
            <person name="Saunders D."/>
            <person name="Sharp S."/>
            <person name="Squares R."/>
            <person name="Squares S."/>
            <person name="Taylor K."/>
            <person name="Warren T."/>
            <person name="Wietzorrek A."/>
            <person name="Woodward J.R."/>
            <person name="Barrell B.G."/>
            <person name="Parkhill J."/>
            <person name="Hopwood D.A."/>
        </authorList>
    </citation>
    <scope>NUCLEOTIDE SEQUENCE [LARGE SCALE GENOMIC DNA]</scope>
    <source>
        <strain>ATCC BAA-471 / A3(2) / M145</strain>
    </source>
</reference>
<proteinExistence type="inferred from homology"/>
<gene>
    <name evidence="1" type="primary">ybeY</name>
    <name type="ordered locus">SCO2533</name>
    <name type="ORF">SCC117.06</name>
</gene>
<protein>
    <recommendedName>
        <fullName evidence="1">Endoribonuclease YbeY</fullName>
        <ecNumber evidence="1">3.1.-.-</ecNumber>
    </recommendedName>
</protein>
<dbReference type="EC" id="3.1.-.-" evidence="1"/>
<dbReference type="EMBL" id="AL939113">
    <property type="protein sequence ID" value="CAB66427.1"/>
    <property type="molecule type" value="Genomic_DNA"/>
</dbReference>
<dbReference type="RefSeq" id="NP_626772.1">
    <property type="nucleotide sequence ID" value="NC_003888.3"/>
</dbReference>
<dbReference type="RefSeq" id="WP_003976270.1">
    <property type="nucleotide sequence ID" value="NZ_VNID01000001.1"/>
</dbReference>
<dbReference type="SMR" id="Q9L2L4"/>
<dbReference type="FunCoup" id="Q9L2L4">
    <property type="interactions" value="71"/>
</dbReference>
<dbReference type="STRING" id="100226.gene:17760135"/>
<dbReference type="PaxDb" id="100226-SCO2533"/>
<dbReference type="GeneID" id="91386471"/>
<dbReference type="KEGG" id="sco:SCO2533"/>
<dbReference type="PATRIC" id="fig|100226.15.peg.2578"/>
<dbReference type="eggNOG" id="COG0319">
    <property type="taxonomic scope" value="Bacteria"/>
</dbReference>
<dbReference type="HOGENOM" id="CLU_106710_3_2_11"/>
<dbReference type="InParanoid" id="Q9L2L4"/>
<dbReference type="OrthoDB" id="9807740at2"/>
<dbReference type="PhylomeDB" id="Q9L2L4"/>
<dbReference type="Proteomes" id="UP000001973">
    <property type="component" value="Chromosome"/>
</dbReference>
<dbReference type="GO" id="GO:0005737">
    <property type="term" value="C:cytoplasm"/>
    <property type="evidence" value="ECO:0007669"/>
    <property type="project" value="UniProtKB-SubCell"/>
</dbReference>
<dbReference type="GO" id="GO:0004222">
    <property type="term" value="F:metalloendopeptidase activity"/>
    <property type="evidence" value="ECO:0007669"/>
    <property type="project" value="InterPro"/>
</dbReference>
<dbReference type="GO" id="GO:0004521">
    <property type="term" value="F:RNA endonuclease activity"/>
    <property type="evidence" value="ECO:0007669"/>
    <property type="project" value="UniProtKB-UniRule"/>
</dbReference>
<dbReference type="GO" id="GO:0008270">
    <property type="term" value="F:zinc ion binding"/>
    <property type="evidence" value="ECO:0007669"/>
    <property type="project" value="UniProtKB-UniRule"/>
</dbReference>
<dbReference type="GO" id="GO:0006364">
    <property type="term" value="P:rRNA processing"/>
    <property type="evidence" value="ECO:0007669"/>
    <property type="project" value="UniProtKB-UniRule"/>
</dbReference>
<dbReference type="Gene3D" id="3.40.390.30">
    <property type="entry name" value="Metalloproteases ('zincins'), catalytic domain"/>
    <property type="match status" value="1"/>
</dbReference>
<dbReference type="HAMAP" id="MF_00009">
    <property type="entry name" value="Endoribonucl_YbeY"/>
    <property type="match status" value="1"/>
</dbReference>
<dbReference type="InterPro" id="IPR023091">
    <property type="entry name" value="MetalPrtase_cat_dom_sf_prd"/>
</dbReference>
<dbReference type="InterPro" id="IPR002036">
    <property type="entry name" value="YbeY"/>
</dbReference>
<dbReference type="InterPro" id="IPR020549">
    <property type="entry name" value="YbeY_CS"/>
</dbReference>
<dbReference type="NCBIfam" id="TIGR00043">
    <property type="entry name" value="rRNA maturation RNase YbeY"/>
    <property type="match status" value="1"/>
</dbReference>
<dbReference type="PANTHER" id="PTHR46986">
    <property type="entry name" value="ENDORIBONUCLEASE YBEY, CHLOROPLASTIC"/>
    <property type="match status" value="1"/>
</dbReference>
<dbReference type="PANTHER" id="PTHR46986:SF1">
    <property type="entry name" value="ENDORIBONUCLEASE YBEY, CHLOROPLASTIC"/>
    <property type="match status" value="1"/>
</dbReference>
<dbReference type="Pfam" id="PF02130">
    <property type="entry name" value="YbeY"/>
    <property type="match status" value="1"/>
</dbReference>
<dbReference type="SUPFAM" id="SSF55486">
    <property type="entry name" value="Metalloproteases ('zincins'), catalytic domain"/>
    <property type="match status" value="1"/>
</dbReference>
<dbReference type="PROSITE" id="PS01306">
    <property type="entry name" value="UPF0054"/>
    <property type="match status" value="1"/>
</dbReference>
<evidence type="ECO:0000255" key="1">
    <source>
        <dbReference type="HAMAP-Rule" id="MF_00009"/>
    </source>
</evidence>
<accession>Q9L2L4</accession>